<sequence>MGGYKGIKADGGKVNQAKQLAAKIAKDIEACQKQTQQLAEYIEGSDWEGQFANKVKDVLLIMAKFQEELVQPMADHQKAIDNLSQNLAKYDTLSIKQGLDRVNP</sequence>
<comment type="function">
    <text evidence="1 2">Virulence factor that is important for the establishment of infection in the host. EsxB is required for EsxA synthesis as well as secretion (By similarity). Mediates together with EsxA the release of S.aureus from the host cell. Also inhibits host cytokine production and thus modulates dendritic cell-mediated immunity (By similarity).</text>
</comment>
<comment type="subunit">
    <text evidence="3">Homodimer. When mixed with EsxA does not form heterodimers.</text>
</comment>
<comment type="subcellular location">
    <subcellularLocation>
        <location evidence="2">Secreted</location>
    </subcellularLocation>
    <text evidence="2">Secreted via the ESAT-6 secretion system (Ess) / type VII secretion system (T7SS).</text>
</comment>
<comment type="similarity">
    <text evidence="4">Belongs to the WXG100 family.</text>
</comment>
<name>ESXB_STAAN</name>
<accession>Q7A7R8</accession>
<feature type="chain" id="PRO_0000167832" description="Type VII secretion system extracellular protein B">
    <location>
        <begin position="1"/>
        <end position="104"/>
    </location>
</feature>
<keyword id="KW-0964">Secreted</keyword>
<keyword id="KW-0843">Virulence</keyword>
<evidence type="ECO:0000250" key="1">
    <source>
        <dbReference type="UniProtKB" id="A0A0H2XIE9"/>
    </source>
</evidence>
<evidence type="ECO:0000250" key="2">
    <source>
        <dbReference type="UniProtKB" id="P0C047"/>
    </source>
</evidence>
<evidence type="ECO:0000250" key="3">
    <source>
        <dbReference type="UniProtKB" id="Q2G182"/>
    </source>
</evidence>
<evidence type="ECO:0000305" key="4"/>
<gene>
    <name evidence="2" type="primary">esxB</name>
    <name type="ordered locus">SA0278</name>
</gene>
<reference key="1">
    <citation type="journal article" date="2001" name="Lancet">
        <title>Whole genome sequencing of meticillin-resistant Staphylococcus aureus.</title>
        <authorList>
            <person name="Kuroda M."/>
            <person name="Ohta T."/>
            <person name="Uchiyama I."/>
            <person name="Baba T."/>
            <person name="Yuzawa H."/>
            <person name="Kobayashi I."/>
            <person name="Cui L."/>
            <person name="Oguchi A."/>
            <person name="Aoki K."/>
            <person name="Nagai Y."/>
            <person name="Lian J.-Q."/>
            <person name="Ito T."/>
            <person name="Kanamori M."/>
            <person name="Matsumaru H."/>
            <person name="Maruyama A."/>
            <person name="Murakami H."/>
            <person name="Hosoyama A."/>
            <person name="Mizutani-Ui Y."/>
            <person name="Takahashi N.K."/>
            <person name="Sawano T."/>
            <person name="Inoue R."/>
            <person name="Kaito C."/>
            <person name="Sekimizu K."/>
            <person name="Hirakawa H."/>
            <person name="Kuhara S."/>
            <person name="Goto S."/>
            <person name="Yabuzaki J."/>
            <person name="Kanehisa M."/>
            <person name="Yamashita A."/>
            <person name="Oshima K."/>
            <person name="Furuya K."/>
            <person name="Yoshino C."/>
            <person name="Shiba T."/>
            <person name="Hattori M."/>
            <person name="Ogasawara N."/>
            <person name="Hayashi H."/>
            <person name="Hiramatsu K."/>
        </authorList>
    </citation>
    <scope>NUCLEOTIDE SEQUENCE [LARGE SCALE GENOMIC DNA]</scope>
    <source>
        <strain>N315</strain>
    </source>
</reference>
<protein>
    <recommendedName>
        <fullName evidence="2">Type VII secretion system extracellular protein B</fullName>
        <shortName evidence="2">Ess extracellular protein B</shortName>
    </recommendedName>
</protein>
<dbReference type="EMBL" id="BA000018">
    <property type="protein sequence ID" value="BAB41502.1"/>
    <property type="molecule type" value="Genomic_DNA"/>
</dbReference>
<dbReference type="PIR" id="C89793">
    <property type="entry name" value="C89793"/>
</dbReference>
<dbReference type="RefSeq" id="WP_000509671.1">
    <property type="nucleotide sequence ID" value="NC_002745.2"/>
</dbReference>
<dbReference type="SMR" id="Q7A7R8"/>
<dbReference type="EnsemblBacteria" id="BAB41502">
    <property type="protein sequence ID" value="BAB41502"/>
    <property type="gene ID" value="BAB41502"/>
</dbReference>
<dbReference type="KEGG" id="sau:SA0278"/>
<dbReference type="HOGENOM" id="CLU_2248426_0_0_9"/>
<dbReference type="GO" id="GO:0005576">
    <property type="term" value="C:extracellular region"/>
    <property type="evidence" value="ECO:0007669"/>
    <property type="project" value="UniProtKB-SubCell"/>
</dbReference>
<dbReference type="InterPro" id="IPR036689">
    <property type="entry name" value="ESAT-6-like_sf"/>
</dbReference>
<dbReference type="InterPro" id="IPR010310">
    <property type="entry name" value="T7SS_ESAT-6-like"/>
</dbReference>
<dbReference type="Pfam" id="PF06013">
    <property type="entry name" value="WXG100"/>
    <property type="match status" value="1"/>
</dbReference>
<dbReference type="SUPFAM" id="SSF140453">
    <property type="entry name" value="EsxAB dimer-like"/>
    <property type="match status" value="1"/>
</dbReference>
<proteinExistence type="inferred from homology"/>
<organism>
    <name type="scientific">Staphylococcus aureus (strain N315)</name>
    <dbReference type="NCBI Taxonomy" id="158879"/>
    <lineage>
        <taxon>Bacteria</taxon>
        <taxon>Bacillati</taxon>
        <taxon>Bacillota</taxon>
        <taxon>Bacilli</taxon>
        <taxon>Bacillales</taxon>
        <taxon>Staphylococcaceae</taxon>
        <taxon>Staphylococcus</taxon>
    </lineage>
</organism>